<protein>
    <recommendedName>
        <fullName>Putative E3 ubiquitin-protein ligase ARI4</fullName>
        <ecNumber evidence="2">2.3.2.31</ecNumber>
    </recommendedName>
    <alternativeName>
        <fullName>ARIADNE-like protein ARI4</fullName>
    </alternativeName>
    <alternativeName>
        <fullName>Protein ariadne homolog 4</fullName>
    </alternativeName>
    <alternativeName>
        <fullName evidence="6">RING-type E3 ubiquitin transferase ARI4</fullName>
    </alternativeName>
</protein>
<dbReference type="EC" id="2.3.2.31" evidence="2"/>
<dbReference type="EMBL" id="AJ510207">
    <property type="status" value="NOT_ANNOTATED_CDS"/>
    <property type="molecule type" value="Genomic_DNA"/>
</dbReference>
<dbReference type="EMBL" id="AB018114">
    <property type="protein sequence ID" value="BAB02696.1"/>
    <property type="status" value="ALT_SEQ"/>
    <property type="molecule type" value="Genomic_DNA"/>
</dbReference>
<dbReference type="EMBL" id="CP002686">
    <property type="protein sequence ID" value="AEE77356.1"/>
    <property type="status" value="ALT_SEQ"/>
    <property type="molecule type" value="Genomic_DNA"/>
</dbReference>
<dbReference type="RefSeq" id="NP_189409.1">
    <property type="nucleotide sequence ID" value="NM_113688.1"/>
</dbReference>
<dbReference type="SMR" id="Q9LVW9"/>
<dbReference type="FunCoup" id="Q9LVW9">
    <property type="interactions" value="2885"/>
</dbReference>
<dbReference type="STRING" id="3702.Q9LVW9"/>
<dbReference type="PeptideAtlas" id="Q9LVW9"/>
<dbReference type="GeneID" id="822394"/>
<dbReference type="KEGG" id="ath:AT3G27720"/>
<dbReference type="Araport" id="AT3G27720"/>
<dbReference type="TAIR" id="AT3G27720">
    <property type="gene designation" value="ARI4"/>
</dbReference>
<dbReference type="InParanoid" id="Q9LVW9"/>
<dbReference type="PhylomeDB" id="Q9LVW9"/>
<dbReference type="UniPathway" id="UPA00143"/>
<dbReference type="Proteomes" id="UP000006548">
    <property type="component" value="Chromosome 3"/>
</dbReference>
<dbReference type="ExpressionAtlas" id="Q9LVW9">
    <property type="expression patterns" value="baseline and differential"/>
</dbReference>
<dbReference type="GO" id="GO:0005737">
    <property type="term" value="C:cytoplasm"/>
    <property type="evidence" value="ECO:0000318"/>
    <property type="project" value="GO_Central"/>
</dbReference>
<dbReference type="GO" id="GO:0000151">
    <property type="term" value="C:ubiquitin ligase complex"/>
    <property type="evidence" value="ECO:0000318"/>
    <property type="project" value="GO_Central"/>
</dbReference>
<dbReference type="GO" id="GO:0031624">
    <property type="term" value="F:ubiquitin conjugating enzyme binding"/>
    <property type="evidence" value="ECO:0000318"/>
    <property type="project" value="GO_Central"/>
</dbReference>
<dbReference type="GO" id="GO:0061630">
    <property type="term" value="F:ubiquitin protein ligase activity"/>
    <property type="evidence" value="ECO:0000318"/>
    <property type="project" value="GO_Central"/>
</dbReference>
<dbReference type="GO" id="GO:0008270">
    <property type="term" value="F:zinc ion binding"/>
    <property type="evidence" value="ECO:0007669"/>
    <property type="project" value="UniProtKB-KW"/>
</dbReference>
<dbReference type="GO" id="GO:0016567">
    <property type="term" value="P:protein ubiquitination"/>
    <property type="evidence" value="ECO:0007669"/>
    <property type="project" value="UniProtKB-UniPathway"/>
</dbReference>
<dbReference type="GO" id="GO:0006511">
    <property type="term" value="P:ubiquitin-dependent protein catabolic process"/>
    <property type="evidence" value="ECO:0000318"/>
    <property type="project" value="GO_Central"/>
</dbReference>
<dbReference type="CDD" id="cd20346">
    <property type="entry name" value="BRcat_RBR_ANKIB1"/>
    <property type="match status" value="1"/>
</dbReference>
<dbReference type="CDD" id="cd22586">
    <property type="entry name" value="Rcat_RBR_ARI1-like"/>
    <property type="match status" value="1"/>
</dbReference>
<dbReference type="CDD" id="cd16773">
    <property type="entry name" value="RING-HC_RBR_TRIAD1"/>
    <property type="match status" value="1"/>
</dbReference>
<dbReference type="FunFam" id="1.20.120.1750:FF:000013">
    <property type="entry name" value="RBR-type E3 ubiquitin transferase"/>
    <property type="match status" value="1"/>
</dbReference>
<dbReference type="FunFam" id="3.30.40.10:FF:000019">
    <property type="entry name" value="RBR-type E3 ubiquitin transferase"/>
    <property type="match status" value="1"/>
</dbReference>
<dbReference type="Gene3D" id="1.20.120.1750">
    <property type="match status" value="1"/>
</dbReference>
<dbReference type="Gene3D" id="3.30.40.10">
    <property type="entry name" value="Zinc/RING finger domain, C3HC4 (zinc finger)"/>
    <property type="match status" value="1"/>
</dbReference>
<dbReference type="InterPro" id="IPR045840">
    <property type="entry name" value="Ariadne"/>
</dbReference>
<dbReference type="InterPro" id="IPR048962">
    <property type="entry name" value="ARIH1-like_UBL"/>
</dbReference>
<dbReference type="InterPro" id="IPR031127">
    <property type="entry name" value="E3_UB_ligase_RBR"/>
</dbReference>
<dbReference type="InterPro" id="IPR002867">
    <property type="entry name" value="IBR_dom"/>
</dbReference>
<dbReference type="InterPro" id="IPR044066">
    <property type="entry name" value="TRIAD_supradom"/>
</dbReference>
<dbReference type="InterPro" id="IPR018957">
    <property type="entry name" value="Znf_C3HC4_RING-type"/>
</dbReference>
<dbReference type="InterPro" id="IPR001841">
    <property type="entry name" value="Znf_RING"/>
</dbReference>
<dbReference type="InterPro" id="IPR013083">
    <property type="entry name" value="Znf_RING/FYVE/PHD"/>
</dbReference>
<dbReference type="PANTHER" id="PTHR11685">
    <property type="entry name" value="RBR FAMILY RING FINGER AND IBR DOMAIN-CONTAINING"/>
    <property type="match status" value="1"/>
</dbReference>
<dbReference type="Pfam" id="PF19422">
    <property type="entry name" value="Ariadne"/>
    <property type="match status" value="1"/>
</dbReference>
<dbReference type="Pfam" id="PF01485">
    <property type="entry name" value="IBR"/>
    <property type="match status" value="1"/>
</dbReference>
<dbReference type="Pfam" id="PF22191">
    <property type="entry name" value="IBR_1"/>
    <property type="match status" value="1"/>
</dbReference>
<dbReference type="Pfam" id="PF21235">
    <property type="entry name" value="UBA_ARI1"/>
    <property type="match status" value="1"/>
</dbReference>
<dbReference type="Pfam" id="PF00097">
    <property type="entry name" value="zf-C3HC4"/>
    <property type="match status" value="1"/>
</dbReference>
<dbReference type="SMART" id="SM00647">
    <property type="entry name" value="IBR"/>
    <property type="match status" value="2"/>
</dbReference>
<dbReference type="SUPFAM" id="SSF57850">
    <property type="entry name" value="RING/U-box"/>
    <property type="match status" value="3"/>
</dbReference>
<dbReference type="PROSITE" id="PS51873">
    <property type="entry name" value="TRIAD"/>
    <property type="match status" value="1"/>
</dbReference>
<dbReference type="PROSITE" id="PS50089">
    <property type="entry name" value="ZF_RING_2"/>
    <property type="match status" value="1"/>
</dbReference>
<evidence type="ECO:0000250" key="1"/>
<evidence type="ECO:0000250" key="2">
    <source>
        <dbReference type="UniProtKB" id="Q9Y4X5"/>
    </source>
</evidence>
<evidence type="ECO:0000255" key="3">
    <source>
        <dbReference type="PROSITE-ProRule" id="PRU01221"/>
    </source>
</evidence>
<evidence type="ECO:0000256" key="4">
    <source>
        <dbReference type="SAM" id="MobiDB-lite"/>
    </source>
</evidence>
<evidence type="ECO:0000269" key="5">
    <source>
    </source>
</evidence>
<evidence type="ECO:0000305" key="6"/>
<comment type="function">
    <text evidence="1 5">Might act as an E3 ubiquitin-protein ligase, or as part of E3 complex, which accepts ubiquitin from specific E2 ubiquitin-conjugating enzymes and then transfers it to substrates.</text>
</comment>
<comment type="catalytic activity">
    <reaction evidence="2">
        <text>[E2 ubiquitin-conjugating enzyme]-S-ubiquitinyl-L-cysteine + [acceptor protein]-L-lysine = [E2 ubiquitin-conjugating enzyme]-L-cysteine + [acceptor protein]-N(6)-ubiquitinyl-L-lysine.</text>
        <dbReference type="EC" id="2.3.2.31"/>
    </reaction>
</comment>
<comment type="cofactor">
    <cofactor evidence="6">
        <name>Zn(2+)</name>
        <dbReference type="ChEBI" id="CHEBI:29105"/>
    </cofactor>
    <text evidence="6">Binds 4 Zn(2+) ions per subunit.</text>
</comment>
<comment type="pathway">
    <text>Protein modification; protein ubiquitination.</text>
</comment>
<comment type="domain">
    <text evidence="2">Members of the RBR family are atypical E3 ligases. They interact with the E2 conjugating enzyme UBE2L3 and function like HECT-type E3 enzymes: they bind E2s via the first RING-type zinc finger, but require an obligate trans-thiolation step during the ubiquitin transfer, requiring a conserved active site Cys residue in the second RING-type zinc finger. The active site probably forms a thioester intermediate with ubiquitin taken from the active-site cysteine of the E2 before ultimately transferring it to a Lys residue on the substrate.</text>
</comment>
<comment type="similarity">
    <text evidence="6">Belongs to the RBR family. Ariadne subfamily.</text>
</comment>
<comment type="caution">
    <text evidence="6">Could be the product of a pseudogene.</text>
</comment>
<comment type="sequence caution" evidence="6">
    <conflict type="erroneous gene model prediction">
        <sequence resource="EMBL-CDS" id="AEE77356"/>
    </conflict>
</comment>
<comment type="sequence caution" evidence="6">
    <conflict type="frameshift">
        <sequence resource="EMBL-CDS" id="AEE77356"/>
    </conflict>
</comment>
<comment type="sequence caution" evidence="6">
    <conflict type="frameshift">
        <sequence resource="EMBL" id="AJ510207"/>
    </conflict>
</comment>
<comment type="sequence caution" evidence="6">
    <conflict type="erroneous gene model prediction">
        <sequence resource="EMBL-CDS" id="BAB02696"/>
    </conflict>
</comment>
<comment type="sequence caution" evidence="6">
    <conflict type="frameshift">
        <sequence resource="EMBL-CDS" id="BAB02696"/>
    </conflict>
</comment>
<proteinExistence type="uncertain"/>
<gene>
    <name type="primary">ARI4</name>
    <name type="ordered locus">At3g27720</name>
    <name type="ORF">MGF10.12</name>
</gene>
<feature type="chain" id="PRO_0000356197" description="Putative E3 ubiquitin-protein ligase ARI4">
    <location>
        <begin position="1"/>
        <end position="529"/>
    </location>
</feature>
<feature type="zinc finger region" description="RING-type 1" evidence="3">
    <location>
        <begin position="119"/>
        <end position="169"/>
    </location>
</feature>
<feature type="zinc finger region" description="IBR-type" evidence="3">
    <location>
        <begin position="186"/>
        <end position="250"/>
    </location>
</feature>
<feature type="zinc finger region" description="RING-type 2; atypical" evidence="3">
    <location>
        <begin position="277"/>
        <end position="305"/>
    </location>
</feature>
<feature type="region of interest" description="Disordered" evidence="4">
    <location>
        <begin position="1"/>
        <end position="23"/>
    </location>
</feature>
<feature type="region of interest" description="TRIAD supradomain" evidence="3">
    <location>
        <begin position="115"/>
        <end position="327"/>
    </location>
</feature>
<feature type="compositionally biased region" description="Acidic residues" evidence="4">
    <location>
        <begin position="1"/>
        <end position="22"/>
    </location>
</feature>
<feature type="active site" evidence="3">
    <location>
        <position position="290"/>
    </location>
</feature>
<feature type="binding site" evidence="3">
    <location>
        <position position="119"/>
    </location>
    <ligand>
        <name>Zn(2+)</name>
        <dbReference type="ChEBI" id="CHEBI:29105"/>
        <label>1</label>
    </ligand>
</feature>
<feature type="binding site" evidence="3">
    <location>
        <position position="122"/>
    </location>
    <ligand>
        <name>Zn(2+)</name>
        <dbReference type="ChEBI" id="CHEBI:29105"/>
        <label>1</label>
    </ligand>
</feature>
<feature type="binding site" evidence="3">
    <location>
        <position position="137"/>
    </location>
    <ligand>
        <name>Zn(2+)</name>
        <dbReference type="ChEBI" id="CHEBI:29105"/>
        <label>2</label>
    </ligand>
</feature>
<feature type="binding site" evidence="3">
    <location>
        <position position="139"/>
    </location>
    <ligand>
        <name>Zn(2+)</name>
        <dbReference type="ChEBI" id="CHEBI:29105"/>
        <label>2</label>
    </ligand>
</feature>
<feature type="binding site" evidence="3">
    <location>
        <position position="142"/>
    </location>
    <ligand>
        <name>Zn(2+)</name>
        <dbReference type="ChEBI" id="CHEBI:29105"/>
        <label>1</label>
    </ligand>
</feature>
<feature type="binding site" evidence="3">
    <location>
        <position position="145"/>
    </location>
    <ligand>
        <name>Zn(2+)</name>
        <dbReference type="ChEBI" id="CHEBI:29105"/>
        <label>1</label>
    </ligand>
</feature>
<feature type="binding site" evidence="3">
    <location>
        <position position="164"/>
    </location>
    <ligand>
        <name>Zn(2+)</name>
        <dbReference type="ChEBI" id="CHEBI:29105"/>
        <label>2</label>
    </ligand>
</feature>
<feature type="binding site" evidence="3">
    <location>
        <position position="169"/>
    </location>
    <ligand>
        <name>Zn(2+)</name>
        <dbReference type="ChEBI" id="CHEBI:29105"/>
        <label>2</label>
    </ligand>
</feature>
<feature type="binding site" evidence="3">
    <location>
        <position position="206"/>
    </location>
    <ligand>
        <name>Zn(2+)</name>
        <dbReference type="ChEBI" id="CHEBI:29105"/>
        <label>3</label>
    </ligand>
</feature>
<feature type="binding site" evidence="3">
    <location>
        <position position="212"/>
    </location>
    <ligand>
        <name>Zn(2+)</name>
        <dbReference type="ChEBI" id="CHEBI:29105"/>
        <label>3</label>
    </ligand>
</feature>
<feature type="binding site" evidence="3">
    <location>
        <position position="230"/>
    </location>
    <ligand>
        <name>Zn(2+)</name>
        <dbReference type="ChEBI" id="CHEBI:29105"/>
        <label>3</label>
    </ligand>
</feature>
<feature type="binding site" evidence="3">
    <location>
        <position position="232"/>
    </location>
    <ligand>
        <name>Zn(2+)</name>
        <dbReference type="ChEBI" id="CHEBI:29105"/>
        <label>3</label>
    </ligand>
</feature>
<feature type="binding site" evidence="3">
    <location>
        <position position="237"/>
    </location>
    <ligand>
        <name>Zn(2+)</name>
        <dbReference type="ChEBI" id="CHEBI:29105"/>
        <label>4</label>
    </ligand>
</feature>
<feature type="binding site" evidence="3">
    <location>
        <position position="240"/>
    </location>
    <ligand>
        <name>Zn(2+)</name>
        <dbReference type="ChEBI" id="CHEBI:29105"/>
        <label>4</label>
    </ligand>
</feature>
<feature type="binding site" evidence="3">
    <location>
        <position position="245"/>
    </location>
    <ligand>
        <name>Zn(2+)</name>
        <dbReference type="ChEBI" id="CHEBI:29105"/>
        <label>4</label>
    </ligand>
</feature>
<feature type="binding site" evidence="3">
    <location>
        <position position="250"/>
    </location>
    <ligand>
        <name>Zn(2+)</name>
        <dbReference type="ChEBI" id="CHEBI:29105"/>
        <label>4</label>
    </ligand>
</feature>
<feature type="binding site" evidence="3">
    <location>
        <position position="277"/>
    </location>
    <ligand>
        <name>Zn(2+)</name>
        <dbReference type="ChEBI" id="CHEBI:29105"/>
        <label>5</label>
    </ligand>
</feature>
<feature type="binding site" evidence="3">
    <location>
        <position position="280"/>
    </location>
    <ligand>
        <name>Zn(2+)</name>
        <dbReference type="ChEBI" id="CHEBI:29105"/>
        <label>5</label>
    </ligand>
</feature>
<feature type="binding site" evidence="3">
    <location>
        <position position="295"/>
    </location>
    <ligand>
        <name>Zn(2+)</name>
        <dbReference type="ChEBI" id="CHEBI:29105"/>
        <label>5</label>
    </ligand>
</feature>
<feature type="binding site" evidence="3">
    <location>
        <position position="297"/>
    </location>
    <ligand>
        <name>Zn(2+)</name>
        <dbReference type="ChEBI" id="CHEBI:29105"/>
        <label>5</label>
    </ligand>
</feature>
<feature type="binding site" evidence="3">
    <location>
        <position position="302"/>
    </location>
    <ligand>
        <name>Zn(2+)</name>
        <dbReference type="ChEBI" id="CHEBI:29105"/>
        <label>6</label>
    </ligand>
</feature>
<feature type="binding site" evidence="3">
    <location>
        <position position="305"/>
    </location>
    <ligand>
        <name>Zn(2+)</name>
        <dbReference type="ChEBI" id="CHEBI:29105"/>
        <label>6</label>
    </ligand>
</feature>
<feature type="binding site" evidence="3">
    <location>
        <position position="313"/>
    </location>
    <ligand>
        <name>Zn(2+)</name>
        <dbReference type="ChEBI" id="CHEBI:29105"/>
        <label>6</label>
    </ligand>
</feature>
<feature type="binding site" evidence="3">
    <location>
        <position position="323"/>
    </location>
    <ligand>
        <name>Zn(2+)</name>
        <dbReference type="ChEBI" id="CHEBI:29105"/>
        <label>6</label>
    </ligand>
</feature>
<sequence length="529" mass="61626">MDDEYMSLEEEEDNCYPSEFDDHDQMCSNAEESDLQHSREPTSQVITKEALVAAQKEVLVKVMEFLSVTENQARTLLIQYQWNVDKLFSVYTDQGKDVLFSRAGLTVFDPSLTKKTMKCDICMEEDLSKYAMTRMECGHRFCNDCWKEHFTVRINEGEGKRIRCMAYKCNTICDEARQLVSTELAEKFDRFLIESYVEDNNMVKWCPSTPHCGNAIRNIKDDGDVDEVECSCGLQFCFSCLSESHSPCSCLMWKLWKKKCEDESETVNWMTVNTKLCPKCSKPIQKRDGCNHMTCKCGQHFCWLCGQATGRDHSYSSIAGHSCGRYKEEKVRQLERAQRDLDRYTHYHYRYKAHIDSLKLEDKLKKSILKKAVLNSETKDQKVFKEYSWIIDAVNRLFRSRRILSYSYPFVFYMFGKELFKDDMSDEERNIKKNLFEDQQQQLEGNVERLSKILEEPFDEYDHEKVVEMMRHLTNLTAVVDNLCKEMYECIENELLGPLISGIHNIAPYRSKGIEQAAEFSASSACGSS</sequence>
<keyword id="KW-0479">Metal-binding</keyword>
<keyword id="KW-1185">Reference proteome</keyword>
<keyword id="KW-0677">Repeat</keyword>
<keyword id="KW-0808">Transferase</keyword>
<keyword id="KW-0833">Ubl conjugation pathway</keyword>
<keyword id="KW-0862">Zinc</keyword>
<keyword id="KW-0863">Zinc-finger</keyword>
<accession>Q9LVW9</accession>
<accession>F4IXP6</accession>
<reference key="1">
    <citation type="journal article" date="2003" name="Plant Physiol.">
        <title>Identification and characterization of the ARIADNE gene family in Arabidopsis. A group of putative E3 ligases.</title>
        <authorList>
            <person name="Mladek C."/>
            <person name="Guger K."/>
            <person name="Hauser M.-T."/>
        </authorList>
    </citation>
    <scope>NUCLEOTIDE SEQUENCE [GENOMIC DNA]</scope>
    <scope>NOMENCLATURE</scope>
    <scope>GENE FAMILY</scope>
    <source>
        <strain>cv. Columbia</strain>
    </source>
</reference>
<reference key="2">
    <citation type="journal article" date="2000" name="DNA Res.">
        <title>Structural analysis of Arabidopsis thaliana chromosome 3. I. Sequence features of the regions of 4,504,864 bp covered by sixty P1 and TAC clones.</title>
        <authorList>
            <person name="Sato S."/>
            <person name="Nakamura Y."/>
            <person name="Kaneko T."/>
            <person name="Katoh T."/>
            <person name="Asamizu E."/>
            <person name="Tabata S."/>
        </authorList>
    </citation>
    <scope>NUCLEOTIDE SEQUENCE [LARGE SCALE GENOMIC DNA]</scope>
    <source>
        <strain>cv. Columbia</strain>
    </source>
</reference>
<reference key="3">
    <citation type="journal article" date="2017" name="Plant J.">
        <title>Araport11: a complete reannotation of the Arabidopsis thaliana reference genome.</title>
        <authorList>
            <person name="Cheng C.Y."/>
            <person name="Krishnakumar V."/>
            <person name="Chan A.P."/>
            <person name="Thibaud-Nissen F."/>
            <person name="Schobel S."/>
            <person name="Town C.D."/>
        </authorList>
    </citation>
    <scope>GENOME REANNOTATION</scope>
    <source>
        <strain>cv. Columbia</strain>
    </source>
</reference>
<reference key="4">
    <citation type="journal article" date="2002" name="Mol. Biol. Evol.">
        <title>Comparative genomics of the RBR family, including the Parkinson's disease-related gene parkin and the genes of the ariadne subfamily.</title>
        <authorList>
            <person name="Marin I."/>
            <person name="Ferrus A."/>
        </authorList>
    </citation>
    <scope>FUNCTION</scope>
</reference>
<organism>
    <name type="scientific">Arabidopsis thaliana</name>
    <name type="common">Mouse-ear cress</name>
    <dbReference type="NCBI Taxonomy" id="3702"/>
    <lineage>
        <taxon>Eukaryota</taxon>
        <taxon>Viridiplantae</taxon>
        <taxon>Streptophyta</taxon>
        <taxon>Embryophyta</taxon>
        <taxon>Tracheophyta</taxon>
        <taxon>Spermatophyta</taxon>
        <taxon>Magnoliopsida</taxon>
        <taxon>eudicotyledons</taxon>
        <taxon>Gunneridae</taxon>
        <taxon>Pentapetalae</taxon>
        <taxon>rosids</taxon>
        <taxon>malvids</taxon>
        <taxon>Brassicales</taxon>
        <taxon>Brassicaceae</taxon>
        <taxon>Camelineae</taxon>
        <taxon>Arabidopsis</taxon>
    </lineage>
</organism>
<name>ARI4_ARATH</name>